<comment type="function">
    <text evidence="5">Putative neurotoxin.</text>
</comment>
<comment type="subcellular location">
    <subcellularLocation>
        <location evidence="2">Secreted</location>
    </subcellularLocation>
    <subcellularLocation>
        <location evidence="4">Nematocyst</location>
    </subcellularLocation>
</comment>
<comment type="tissue specificity">
    <text evidence="2">Expressed outside of acontia.</text>
</comment>
<comment type="domain">
    <text evidence="4">The presence of a 'disulfide through disulfide knot' structurally defines this protein as a knottin.</text>
</comment>
<evidence type="ECO:0000255" key="1"/>
<evidence type="ECO:0000269" key="2">
    <source>
    </source>
</evidence>
<evidence type="ECO:0000303" key="3">
    <source>
    </source>
</evidence>
<evidence type="ECO:0000305" key="4"/>
<evidence type="ECO:0000305" key="5">
    <source>
    </source>
</evidence>
<accession>P0DY43</accession>
<feature type="signal peptide" evidence="1">
    <location>
        <begin position="1"/>
        <end position="23"/>
    </location>
</feature>
<feature type="chain" id="PRO_0000462201" description="Putative neurotoxin NaH-Cpp1a" evidence="5">
    <location>
        <begin position="24"/>
        <end position="73"/>
    </location>
</feature>
<feature type="disulfide bond" evidence="4">
    <location>
        <begin position="43"/>
        <end position="58"/>
    </location>
</feature>
<feature type="disulfide bond" evidence="4">
    <location>
        <begin position="50"/>
        <end position="63"/>
    </location>
</feature>
<feature type="disulfide bond" evidence="4">
    <location>
        <begin position="57"/>
        <end position="70"/>
    </location>
</feature>
<name>NATX2_CALPY</name>
<proteinExistence type="evidence at protein level"/>
<sequence>MKSFYGILCVAVLMMFHLEMSESRSNFQMLLEDPDYLSLEKRCLNVGQKCTPGNNKCCHTYICSSLDSKCFYR</sequence>
<keyword id="KW-1015">Disulfide bond</keyword>
<keyword id="KW-0960">Knottin</keyword>
<keyword id="KW-0166">Nematocyst</keyword>
<keyword id="KW-0528">Neurotoxin</keyword>
<keyword id="KW-0964">Secreted</keyword>
<keyword id="KW-0732">Signal</keyword>
<keyword id="KW-0800">Toxin</keyword>
<reference key="1">
    <citation type="journal article" date="2024" name="Genome Biol. Evol.">
        <title>Molecular insights into the low complexity secreted venom of Calliactis polypus.</title>
        <authorList>
            <person name="Smith H.L."/>
            <person name="Broszczak D.A."/>
            <person name="Bryan S.E."/>
            <person name="Norton R.S."/>
            <person name="Prentis P.J."/>
        </authorList>
    </citation>
    <scope>NUCLEOTIDE SEQUENCE [MRNA]</scope>
    <scope>IDENTIFICATION BY MASS SPECTROMETRY</scope>
    <scope>SUBCELLULAR LOCATION</scope>
</reference>
<organism>
    <name type="scientific">Calliactis polypus</name>
    <name type="common">Hermit crab anemone</name>
    <name type="synonym">Priapus polypus</name>
    <dbReference type="NCBI Taxonomy" id="656064"/>
    <lineage>
        <taxon>Eukaryota</taxon>
        <taxon>Metazoa</taxon>
        <taxon>Cnidaria</taxon>
        <taxon>Anthozoa</taxon>
        <taxon>Hexacorallia</taxon>
        <taxon>Actiniaria</taxon>
        <taxon>Nynantheae</taxon>
        <taxon>Hormathiidae</taxon>
        <taxon>Calliactis</taxon>
    </lineage>
</organism>
<protein>
    <recommendedName>
        <fullName evidence="3">Putative neurotoxin NaH-Cpp1a</fullName>
    </recommendedName>
    <alternativeName>
        <fullName evidence="3">Unknown C6 protein</fullName>
    </alternativeName>
</protein>
<gene>
    <name evidence="3" type="ORF">c89724_g1_i1</name>
</gene>